<feature type="chain" id="PRO_0000335368" description="Ribosomal RNA small subunit methyltransferase G">
    <location>
        <begin position="1"/>
        <end position="205"/>
    </location>
</feature>
<feature type="binding site" evidence="1">
    <location>
        <position position="71"/>
    </location>
    <ligand>
        <name>S-adenosyl-L-methionine</name>
        <dbReference type="ChEBI" id="CHEBI:59789"/>
    </ligand>
</feature>
<feature type="binding site" evidence="1">
    <location>
        <position position="76"/>
    </location>
    <ligand>
        <name>S-adenosyl-L-methionine</name>
        <dbReference type="ChEBI" id="CHEBI:59789"/>
    </ligand>
</feature>
<feature type="binding site" evidence="1">
    <location>
        <begin position="120"/>
        <end position="121"/>
    </location>
    <ligand>
        <name>S-adenosyl-L-methionine</name>
        <dbReference type="ChEBI" id="CHEBI:59789"/>
    </ligand>
</feature>
<feature type="binding site" evidence="1">
    <location>
        <position position="134"/>
    </location>
    <ligand>
        <name>S-adenosyl-L-methionine</name>
        <dbReference type="ChEBI" id="CHEBI:59789"/>
    </ligand>
</feature>
<protein>
    <recommendedName>
        <fullName evidence="1">Ribosomal RNA small subunit methyltransferase G</fullName>
        <ecNumber evidence="1">2.1.1.170</ecNumber>
    </recommendedName>
    <alternativeName>
        <fullName evidence="1">16S rRNA 7-methylguanosine methyltransferase</fullName>
        <shortName evidence="1">16S rRNA m7G methyltransferase</shortName>
    </alternativeName>
</protein>
<dbReference type="EC" id="2.1.1.170" evidence="1"/>
<dbReference type="EMBL" id="AP007255">
    <property type="protein sequence ID" value="BAE48807.1"/>
    <property type="molecule type" value="Genomic_DNA"/>
</dbReference>
<dbReference type="SMR" id="Q2WBG8"/>
<dbReference type="STRING" id="342108.amb0003"/>
<dbReference type="KEGG" id="mag:amb0003"/>
<dbReference type="HOGENOM" id="CLU_065341_1_1_5"/>
<dbReference type="Proteomes" id="UP000007058">
    <property type="component" value="Chromosome"/>
</dbReference>
<dbReference type="GO" id="GO:0005829">
    <property type="term" value="C:cytosol"/>
    <property type="evidence" value="ECO:0007669"/>
    <property type="project" value="TreeGrafter"/>
</dbReference>
<dbReference type="GO" id="GO:0070043">
    <property type="term" value="F:rRNA (guanine-N7-)-methyltransferase activity"/>
    <property type="evidence" value="ECO:0007669"/>
    <property type="project" value="UniProtKB-UniRule"/>
</dbReference>
<dbReference type="Gene3D" id="3.40.50.150">
    <property type="entry name" value="Vaccinia Virus protein VP39"/>
    <property type="match status" value="1"/>
</dbReference>
<dbReference type="HAMAP" id="MF_00074">
    <property type="entry name" value="16SrRNA_methyltr_G"/>
    <property type="match status" value="1"/>
</dbReference>
<dbReference type="InterPro" id="IPR003682">
    <property type="entry name" value="rRNA_ssu_MeTfrase_G"/>
</dbReference>
<dbReference type="InterPro" id="IPR029063">
    <property type="entry name" value="SAM-dependent_MTases_sf"/>
</dbReference>
<dbReference type="NCBIfam" id="TIGR00138">
    <property type="entry name" value="rsmG_gidB"/>
    <property type="match status" value="1"/>
</dbReference>
<dbReference type="PANTHER" id="PTHR31760">
    <property type="entry name" value="S-ADENOSYL-L-METHIONINE-DEPENDENT METHYLTRANSFERASES SUPERFAMILY PROTEIN"/>
    <property type="match status" value="1"/>
</dbReference>
<dbReference type="PANTHER" id="PTHR31760:SF0">
    <property type="entry name" value="S-ADENOSYL-L-METHIONINE-DEPENDENT METHYLTRANSFERASES SUPERFAMILY PROTEIN"/>
    <property type="match status" value="1"/>
</dbReference>
<dbReference type="Pfam" id="PF02527">
    <property type="entry name" value="GidB"/>
    <property type="match status" value="1"/>
</dbReference>
<dbReference type="PIRSF" id="PIRSF003078">
    <property type="entry name" value="GidB"/>
    <property type="match status" value="1"/>
</dbReference>
<dbReference type="SUPFAM" id="SSF53335">
    <property type="entry name" value="S-adenosyl-L-methionine-dependent methyltransferases"/>
    <property type="match status" value="1"/>
</dbReference>
<comment type="function">
    <text evidence="1">Specifically methylates the N7 position of guanine in position 527 of 16S rRNA.</text>
</comment>
<comment type="catalytic activity">
    <reaction evidence="1">
        <text>guanosine(527) in 16S rRNA + S-adenosyl-L-methionine = N(7)-methylguanosine(527) in 16S rRNA + S-adenosyl-L-homocysteine</text>
        <dbReference type="Rhea" id="RHEA:42732"/>
        <dbReference type="Rhea" id="RHEA-COMP:10209"/>
        <dbReference type="Rhea" id="RHEA-COMP:10210"/>
        <dbReference type="ChEBI" id="CHEBI:57856"/>
        <dbReference type="ChEBI" id="CHEBI:59789"/>
        <dbReference type="ChEBI" id="CHEBI:74269"/>
        <dbReference type="ChEBI" id="CHEBI:74480"/>
        <dbReference type="EC" id="2.1.1.170"/>
    </reaction>
</comment>
<comment type="subcellular location">
    <subcellularLocation>
        <location evidence="1">Cytoplasm</location>
    </subcellularLocation>
</comment>
<comment type="similarity">
    <text evidence="1">Belongs to the methyltransferase superfamily. RNA methyltransferase RsmG family.</text>
</comment>
<sequence>MGPEELLTKSGVSRETLERLRLYADLLVKWQARINLVGPDTVPDLWSRHMLDSVQLFPLIKVGARRLVDLGSGAGFPGLVLAVMGAPDVHLVESDSRKCAFLREVARVTETPVTVINKRIEQVAPLGADVVTARALAPLDRLLGWAFPHLAEGGECLFLKGRGAEDELTASAKEWNITASRVPSLTDPGGLVLHLREVSRGRAQP</sequence>
<organism>
    <name type="scientific">Paramagnetospirillum magneticum (strain ATCC 700264 / AMB-1)</name>
    <name type="common">Magnetospirillum magneticum</name>
    <dbReference type="NCBI Taxonomy" id="342108"/>
    <lineage>
        <taxon>Bacteria</taxon>
        <taxon>Pseudomonadati</taxon>
        <taxon>Pseudomonadota</taxon>
        <taxon>Alphaproteobacteria</taxon>
        <taxon>Rhodospirillales</taxon>
        <taxon>Magnetospirillaceae</taxon>
        <taxon>Paramagnetospirillum</taxon>
    </lineage>
</organism>
<reference key="1">
    <citation type="journal article" date="2005" name="DNA Res.">
        <title>Complete genome sequence of the facultative anaerobic magnetotactic bacterium Magnetospirillum sp. strain AMB-1.</title>
        <authorList>
            <person name="Matsunaga T."/>
            <person name="Okamura Y."/>
            <person name="Fukuda Y."/>
            <person name="Wahyudi A.T."/>
            <person name="Murase Y."/>
            <person name="Takeyama H."/>
        </authorList>
    </citation>
    <scope>NUCLEOTIDE SEQUENCE [LARGE SCALE GENOMIC DNA]</scope>
    <source>
        <strain>ATCC 700264 / AMB-1</strain>
    </source>
</reference>
<accession>Q2WBG8</accession>
<proteinExistence type="inferred from homology"/>
<keyword id="KW-0963">Cytoplasm</keyword>
<keyword id="KW-0489">Methyltransferase</keyword>
<keyword id="KW-0698">rRNA processing</keyword>
<keyword id="KW-0949">S-adenosyl-L-methionine</keyword>
<keyword id="KW-0808">Transferase</keyword>
<name>RSMG_PARM1</name>
<evidence type="ECO:0000255" key="1">
    <source>
        <dbReference type="HAMAP-Rule" id="MF_00074"/>
    </source>
</evidence>
<gene>
    <name evidence="1" type="primary">rsmG</name>
    <name type="ordered locus">amb0003</name>
</gene>